<proteinExistence type="inferred from homology"/>
<comment type="function">
    <text evidence="1">Guanine nucleotide exchange factor for ARF3 required for localization of ARF3 to the bud neck and tip and involved in actin patch polarization.</text>
</comment>
<comment type="subcellular location">
    <subcellularLocation>
        <location evidence="1">Cytoplasm</location>
    </subcellularLocation>
    <subcellularLocation>
        <location evidence="1">Cell membrane</location>
        <topology evidence="1">Peripheral membrane protein</topology>
    </subcellularLocation>
    <subcellularLocation>
        <location evidence="1">Bud neck</location>
    </subcellularLocation>
    <subcellularLocation>
        <location evidence="1">Bud tip</location>
    </subcellularLocation>
    <text evidence="1">Localizes at the cell membrane only at the bud neck and bud tip and this localization is ARF3-dependent.</text>
</comment>
<comment type="similarity">
    <text evidence="4">Belongs to the YEL1 family.</text>
</comment>
<protein>
    <recommendedName>
        <fullName>Guanine-nucleotide exchange factor YEL1</fullName>
    </recommendedName>
</protein>
<reference key="1">
    <citation type="journal article" date="2007" name="Proc. Natl. Acad. Sci. U.S.A.">
        <title>Independent sorting-out of thousands of duplicated gene pairs in two yeast species descended from a whole-genome duplication.</title>
        <authorList>
            <person name="Scannell D.R."/>
            <person name="Frank A.C."/>
            <person name="Conant G.C."/>
            <person name="Byrne K.P."/>
            <person name="Woolfit M."/>
            <person name="Wolfe K.H."/>
        </authorList>
    </citation>
    <scope>NUCLEOTIDE SEQUENCE [LARGE SCALE GENOMIC DNA]</scope>
    <source>
        <strain>ATCC 22028 / DSM 70294 / BCRC 21397 / CBS 2163 / NBRC 10782 / NRRL Y-8283 / UCD 57-17</strain>
    </source>
</reference>
<dbReference type="EMBL" id="DS480378">
    <property type="protein sequence ID" value="EDO19556.1"/>
    <property type="molecule type" value="Genomic_DNA"/>
</dbReference>
<dbReference type="RefSeq" id="XP_001647414.1">
    <property type="nucleotide sequence ID" value="XM_001647364.1"/>
</dbReference>
<dbReference type="SMR" id="A7TDT6"/>
<dbReference type="FunCoup" id="A7TDT6">
    <property type="interactions" value="25"/>
</dbReference>
<dbReference type="STRING" id="436907.A7TDT6"/>
<dbReference type="GeneID" id="5547914"/>
<dbReference type="KEGG" id="vpo:Kpol_1018p89"/>
<dbReference type="eggNOG" id="KOG0929">
    <property type="taxonomic scope" value="Eukaryota"/>
</dbReference>
<dbReference type="HOGENOM" id="CLU_017717_0_0_1"/>
<dbReference type="InParanoid" id="A7TDT6"/>
<dbReference type="OMA" id="EGRIFIF"/>
<dbReference type="OrthoDB" id="2157641at2759"/>
<dbReference type="PhylomeDB" id="A7TDT6"/>
<dbReference type="Proteomes" id="UP000000267">
    <property type="component" value="Unassembled WGS sequence"/>
</dbReference>
<dbReference type="GO" id="GO:0005935">
    <property type="term" value="C:cellular bud neck"/>
    <property type="evidence" value="ECO:0007669"/>
    <property type="project" value="UniProtKB-SubCell"/>
</dbReference>
<dbReference type="GO" id="GO:0005934">
    <property type="term" value="C:cellular bud tip"/>
    <property type="evidence" value="ECO:0007669"/>
    <property type="project" value="UniProtKB-SubCell"/>
</dbReference>
<dbReference type="GO" id="GO:0005737">
    <property type="term" value="C:cytoplasm"/>
    <property type="evidence" value="ECO:0007669"/>
    <property type="project" value="UniProtKB-SubCell"/>
</dbReference>
<dbReference type="GO" id="GO:0005886">
    <property type="term" value="C:plasma membrane"/>
    <property type="evidence" value="ECO:0007669"/>
    <property type="project" value="UniProtKB-SubCell"/>
</dbReference>
<dbReference type="GO" id="GO:0005085">
    <property type="term" value="F:guanyl-nucleotide exchange factor activity"/>
    <property type="evidence" value="ECO:0007669"/>
    <property type="project" value="UniProtKB-KW"/>
</dbReference>
<dbReference type="GO" id="GO:0051666">
    <property type="term" value="P:actin cortical patch localization"/>
    <property type="evidence" value="ECO:0007669"/>
    <property type="project" value="EnsemblFungi"/>
</dbReference>
<dbReference type="GO" id="GO:0010513">
    <property type="term" value="P:positive regulation of phosphatidylinositol biosynthetic process"/>
    <property type="evidence" value="ECO:0007669"/>
    <property type="project" value="EnsemblFungi"/>
</dbReference>
<dbReference type="GO" id="GO:0008104">
    <property type="term" value="P:protein localization"/>
    <property type="evidence" value="ECO:0007669"/>
    <property type="project" value="EnsemblFungi"/>
</dbReference>
<dbReference type="GO" id="GO:0032012">
    <property type="term" value="P:regulation of ARF protein signal transduction"/>
    <property type="evidence" value="ECO:0007669"/>
    <property type="project" value="InterPro"/>
</dbReference>
<dbReference type="Gene3D" id="1.10.1000.11">
    <property type="entry name" value="Arf Nucleotide-binding Site Opener,domain 2"/>
    <property type="match status" value="1"/>
</dbReference>
<dbReference type="InterPro" id="IPR056468">
    <property type="entry name" value="PH_GEF_YEL1"/>
</dbReference>
<dbReference type="InterPro" id="IPR023394">
    <property type="entry name" value="Sec7_C_sf"/>
</dbReference>
<dbReference type="InterPro" id="IPR000904">
    <property type="entry name" value="Sec7_dom"/>
</dbReference>
<dbReference type="InterPro" id="IPR035999">
    <property type="entry name" value="Sec7_dom_sf"/>
</dbReference>
<dbReference type="PANTHER" id="PTHR10663">
    <property type="entry name" value="GUANYL-NUCLEOTIDE EXCHANGE FACTOR"/>
    <property type="match status" value="1"/>
</dbReference>
<dbReference type="PANTHER" id="PTHR10663:SF373">
    <property type="entry name" value="PH AND SEC7 DOMAIN-CONTAINING PROTEIN C11E3.11C"/>
    <property type="match status" value="1"/>
</dbReference>
<dbReference type="Pfam" id="PF23633">
    <property type="entry name" value="PH_GEF_YEL1"/>
    <property type="match status" value="1"/>
</dbReference>
<dbReference type="Pfam" id="PF01369">
    <property type="entry name" value="Sec7"/>
    <property type="match status" value="1"/>
</dbReference>
<dbReference type="SMART" id="SM00222">
    <property type="entry name" value="Sec7"/>
    <property type="match status" value="1"/>
</dbReference>
<dbReference type="SUPFAM" id="SSF48425">
    <property type="entry name" value="Sec7 domain"/>
    <property type="match status" value="1"/>
</dbReference>
<dbReference type="PROSITE" id="PS50190">
    <property type="entry name" value="SEC7"/>
    <property type="match status" value="1"/>
</dbReference>
<keyword id="KW-1003">Cell membrane</keyword>
<keyword id="KW-0963">Cytoplasm</keyword>
<keyword id="KW-0344">Guanine-nucleotide releasing factor</keyword>
<keyword id="KW-0472">Membrane</keyword>
<keyword id="KW-1185">Reference proteome</keyword>
<sequence>MESRMSRLVPVRSIDEGDSHDDSRDRISAFELKSGNGFLEEEVVGVEDEVEEDEGEDEDEDDEGSEERSDEYWLAVSIFDGNFDGVNYKEYANYLGSPDRLPVLKEFIKLLQPLPNDLLGALGKLSSRLYFIAEAQNIDRILEELSGQWMSTHTSTIWGDNNSWCHIVLFSLLLLNSDLHNDENIGKQSRFTCKMFIENTLYALRKDCERESKELSKEREQDISQELAIFYENLRFNPLPLFTRVDKSAPSVISNIHRRQRRSSGFSTKSPSIHSLSSTISHGSSMALESHTTSNWKFHHNLPLPILYLKENFDNEFVGVNGTFWTMDGVLSIAEKKESKNRRSDDQLASTAEVKSRKTPRKLLFSWLKKSKKPSIFEESNSPVAFLNEHSQWSRARIRITEGRIFIFKLKNNYKDAFLKEQTLESMKALSSSYVVYNLFEALAEVVQENVVIGTFPSSNNILSNRGNFTITIPMGLHEYKVSLEFQTDTVEEAYAYVQSINFWAARLTPVPSAEFEIVSNDEYGWGSKLLREREKHKKENPTDRNPITNAKVSVWYPLLSLDLLYNEFDNIADQTELIKRLQEIREFTEKLECLIDKHNEMKPRMVSAWAGSPYFEKVMDNWNRRYLYLNKQYEKTSIYMKSLTLASEII</sequence>
<accession>A7TDT6</accession>
<evidence type="ECO:0000250" key="1"/>
<evidence type="ECO:0000255" key="2">
    <source>
        <dbReference type="PROSITE-ProRule" id="PRU00189"/>
    </source>
</evidence>
<evidence type="ECO:0000256" key="3">
    <source>
        <dbReference type="SAM" id="MobiDB-lite"/>
    </source>
</evidence>
<evidence type="ECO:0000305" key="4"/>
<gene>
    <name type="primary">YEL1</name>
    <name type="ORF">Kpol_1018p89</name>
</gene>
<feature type="chain" id="PRO_0000404225" description="Guanine-nucleotide exchange factor YEL1">
    <location>
        <begin position="1"/>
        <end position="651"/>
    </location>
</feature>
<feature type="domain" description="SEC7" evidence="2">
    <location>
        <begin position="19"/>
        <end position="230"/>
    </location>
</feature>
<feature type="domain" description="PH">
    <location>
        <begin position="362"/>
        <end position="508"/>
    </location>
</feature>
<feature type="region of interest" description="Disordered" evidence="3">
    <location>
        <begin position="1"/>
        <end position="26"/>
    </location>
</feature>
<feature type="region of interest" description="Disordered" evidence="3">
    <location>
        <begin position="38"/>
        <end position="69"/>
    </location>
</feature>
<feature type="compositionally biased region" description="Basic and acidic residues" evidence="3">
    <location>
        <begin position="13"/>
        <end position="26"/>
    </location>
</feature>
<feature type="compositionally biased region" description="Acidic residues" evidence="3">
    <location>
        <begin position="39"/>
        <end position="65"/>
    </location>
</feature>
<organism>
    <name type="scientific">Vanderwaltozyma polyspora (strain ATCC 22028 / DSM 70294 / BCRC 21397 / CBS 2163 / NBRC 10782 / NRRL Y-8283 / UCD 57-17)</name>
    <name type="common">Kluyveromyces polysporus</name>
    <dbReference type="NCBI Taxonomy" id="436907"/>
    <lineage>
        <taxon>Eukaryota</taxon>
        <taxon>Fungi</taxon>
        <taxon>Dikarya</taxon>
        <taxon>Ascomycota</taxon>
        <taxon>Saccharomycotina</taxon>
        <taxon>Saccharomycetes</taxon>
        <taxon>Saccharomycetales</taxon>
        <taxon>Saccharomycetaceae</taxon>
        <taxon>Vanderwaltozyma</taxon>
    </lineage>
</organism>
<name>YEL1_VANPO</name>